<protein>
    <recommendedName>
        <fullName>1-(5-phosphoribosyl)-5-[(5-phosphoribosylamino)methylideneamino] imidazole-4-carboxamide isomerase</fullName>
        <ecNumber>5.3.1.16</ecNumber>
    </recommendedName>
    <alternativeName>
        <fullName>5-proFAR isomerase</fullName>
    </alternativeName>
    <alternativeName>
        <fullName>Phosphoribosylformimino-5-aminoimidazole carboxamide ribotide isomerase</fullName>
    </alternativeName>
</protein>
<dbReference type="EC" id="5.3.1.16"/>
<dbReference type="EMBL" id="CR382135">
    <property type="protein sequence ID" value="CAG86070.2"/>
    <property type="molecule type" value="Genomic_DNA"/>
</dbReference>
<dbReference type="RefSeq" id="XP_458010.2">
    <property type="nucleotide sequence ID" value="XM_458010.1"/>
</dbReference>
<dbReference type="SMR" id="Q6BUV9"/>
<dbReference type="FunCoup" id="Q6BUV9">
    <property type="interactions" value="236"/>
</dbReference>
<dbReference type="STRING" id="284592.Q6BUV9"/>
<dbReference type="GeneID" id="2900784"/>
<dbReference type="KEGG" id="dha:DEHA2C07568g"/>
<dbReference type="VEuPathDB" id="FungiDB:DEHA2C07568g"/>
<dbReference type="eggNOG" id="KOG3055">
    <property type="taxonomic scope" value="Eukaryota"/>
</dbReference>
<dbReference type="HOGENOM" id="CLU_065050_0_0_1"/>
<dbReference type="InParanoid" id="Q6BUV9"/>
<dbReference type="OMA" id="IEWNKTH"/>
<dbReference type="OrthoDB" id="446074at2759"/>
<dbReference type="UniPathway" id="UPA00031">
    <property type="reaction ID" value="UER00009"/>
</dbReference>
<dbReference type="Proteomes" id="UP000000599">
    <property type="component" value="Chromosome C"/>
</dbReference>
<dbReference type="GO" id="GO:0005737">
    <property type="term" value="C:cytoplasm"/>
    <property type="evidence" value="ECO:0007669"/>
    <property type="project" value="UniProtKB-SubCell"/>
</dbReference>
<dbReference type="GO" id="GO:0003949">
    <property type="term" value="F:1-(5-phosphoribosyl)-5-[(5-phosphoribosylamino)methylideneamino]imidazole-4-carboxamide isomerase activity"/>
    <property type="evidence" value="ECO:0007669"/>
    <property type="project" value="UniProtKB-EC"/>
</dbReference>
<dbReference type="GO" id="GO:0000105">
    <property type="term" value="P:L-histidine biosynthetic process"/>
    <property type="evidence" value="ECO:0007669"/>
    <property type="project" value="UniProtKB-UniPathway"/>
</dbReference>
<dbReference type="GO" id="GO:0000162">
    <property type="term" value="P:L-tryptophan biosynthetic process"/>
    <property type="evidence" value="ECO:0007669"/>
    <property type="project" value="TreeGrafter"/>
</dbReference>
<dbReference type="CDD" id="cd04723">
    <property type="entry name" value="HisA_HisF"/>
    <property type="match status" value="1"/>
</dbReference>
<dbReference type="Gene3D" id="3.20.20.70">
    <property type="entry name" value="Aldolase class I"/>
    <property type="match status" value="1"/>
</dbReference>
<dbReference type="InterPro" id="IPR013785">
    <property type="entry name" value="Aldolase_TIM"/>
</dbReference>
<dbReference type="InterPro" id="IPR011858">
    <property type="entry name" value="His6-like_euk"/>
</dbReference>
<dbReference type="InterPro" id="IPR006062">
    <property type="entry name" value="His_biosynth"/>
</dbReference>
<dbReference type="InterPro" id="IPR044524">
    <property type="entry name" value="Isoase_HisA-like"/>
</dbReference>
<dbReference type="InterPro" id="IPR011060">
    <property type="entry name" value="RibuloseP-bd_barrel"/>
</dbReference>
<dbReference type="NCBIfam" id="TIGR02129">
    <property type="entry name" value="hisA_euk"/>
    <property type="match status" value="1"/>
</dbReference>
<dbReference type="PANTHER" id="PTHR43090">
    <property type="entry name" value="1-(5-PHOSPHORIBOSYL)-5-[(5-PHOSPHORIBOSYLAMINO)METHYLIDENEAMINO] IMIDAZOLE-4-CARBOXAMIDE ISOMERASE"/>
    <property type="match status" value="1"/>
</dbReference>
<dbReference type="PANTHER" id="PTHR43090:SF2">
    <property type="entry name" value="1-(5-PHOSPHORIBOSYL)-5-[(5-PHOSPHORIBOSYLAMINO)METHYLIDENEAMINO] IMIDAZOLE-4-CARBOXAMIDE ISOMERASE"/>
    <property type="match status" value="1"/>
</dbReference>
<dbReference type="Pfam" id="PF00977">
    <property type="entry name" value="His_biosynth"/>
    <property type="match status" value="1"/>
</dbReference>
<dbReference type="SUPFAM" id="SSF51366">
    <property type="entry name" value="Ribulose-phoshate binding barrel"/>
    <property type="match status" value="1"/>
</dbReference>
<reference key="1">
    <citation type="journal article" date="2004" name="Nature">
        <title>Genome evolution in yeasts.</title>
        <authorList>
            <person name="Dujon B."/>
            <person name="Sherman D."/>
            <person name="Fischer G."/>
            <person name="Durrens P."/>
            <person name="Casaregola S."/>
            <person name="Lafontaine I."/>
            <person name="de Montigny J."/>
            <person name="Marck C."/>
            <person name="Neuveglise C."/>
            <person name="Talla E."/>
            <person name="Goffard N."/>
            <person name="Frangeul L."/>
            <person name="Aigle M."/>
            <person name="Anthouard V."/>
            <person name="Babour A."/>
            <person name="Barbe V."/>
            <person name="Barnay S."/>
            <person name="Blanchin S."/>
            <person name="Beckerich J.-M."/>
            <person name="Beyne E."/>
            <person name="Bleykasten C."/>
            <person name="Boisrame A."/>
            <person name="Boyer J."/>
            <person name="Cattolico L."/>
            <person name="Confanioleri F."/>
            <person name="de Daruvar A."/>
            <person name="Despons L."/>
            <person name="Fabre E."/>
            <person name="Fairhead C."/>
            <person name="Ferry-Dumazet H."/>
            <person name="Groppi A."/>
            <person name="Hantraye F."/>
            <person name="Hennequin C."/>
            <person name="Jauniaux N."/>
            <person name="Joyet P."/>
            <person name="Kachouri R."/>
            <person name="Kerrest A."/>
            <person name="Koszul R."/>
            <person name="Lemaire M."/>
            <person name="Lesur I."/>
            <person name="Ma L."/>
            <person name="Muller H."/>
            <person name="Nicaud J.-M."/>
            <person name="Nikolski M."/>
            <person name="Oztas S."/>
            <person name="Ozier-Kalogeropoulos O."/>
            <person name="Pellenz S."/>
            <person name="Potier S."/>
            <person name="Richard G.-F."/>
            <person name="Straub M.-L."/>
            <person name="Suleau A."/>
            <person name="Swennen D."/>
            <person name="Tekaia F."/>
            <person name="Wesolowski-Louvel M."/>
            <person name="Westhof E."/>
            <person name="Wirth B."/>
            <person name="Zeniou-Meyer M."/>
            <person name="Zivanovic Y."/>
            <person name="Bolotin-Fukuhara M."/>
            <person name="Thierry A."/>
            <person name="Bouchier C."/>
            <person name="Caudron B."/>
            <person name="Scarpelli C."/>
            <person name="Gaillardin C."/>
            <person name="Weissenbach J."/>
            <person name="Wincker P."/>
            <person name="Souciet J.-L."/>
        </authorList>
    </citation>
    <scope>NUCLEOTIDE SEQUENCE [LARGE SCALE GENOMIC DNA]</scope>
    <source>
        <strain>ATCC 36239 / CBS 767 / BCRC 21394 / JCM 1990 / NBRC 0083 / IGC 2968</strain>
    </source>
</reference>
<keyword id="KW-0028">Amino-acid biosynthesis</keyword>
<keyword id="KW-0963">Cytoplasm</keyword>
<keyword id="KW-0368">Histidine biosynthesis</keyword>
<keyword id="KW-0413">Isomerase</keyword>
<keyword id="KW-1185">Reference proteome</keyword>
<name>HIS4_DEBHA</name>
<comment type="catalytic activity">
    <reaction>
        <text>1-(5-phospho-beta-D-ribosyl)-5-[(5-phospho-beta-D-ribosylamino)methylideneamino]imidazole-4-carboxamide = 5-[(5-phospho-1-deoxy-D-ribulos-1-ylimino)methylamino]-1-(5-phospho-beta-D-ribosyl)imidazole-4-carboxamide</text>
        <dbReference type="Rhea" id="RHEA:15469"/>
        <dbReference type="ChEBI" id="CHEBI:58435"/>
        <dbReference type="ChEBI" id="CHEBI:58525"/>
        <dbReference type="EC" id="5.3.1.16"/>
    </reaction>
</comment>
<comment type="pathway">
    <text>Amino-acid biosynthesis; L-histidine biosynthesis; L-histidine from 5-phospho-alpha-D-ribose 1-diphosphate: step 4/9.</text>
</comment>
<comment type="subcellular location">
    <subcellularLocation>
        <location evidence="1">Cytoplasm</location>
    </subcellularLocation>
</comment>
<comment type="similarity">
    <text evidence="2">Belongs to the HisA/HisF family.</text>
</comment>
<gene>
    <name type="primary">HIS6</name>
    <name type="ordered locus">DEHA2C07568g</name>
</gene>
<feature type="chain" id="PRO_0000141958" description="1-(5-phosphoribosyl)-5-[(5-phosphoribosylamino)methylideneamino] imidazole-4-carboxamide isomerase">
    <location>
        <begin position="1"/>
        <end position="276"/>
    </location>
</feature>
<proteinExistence type="inferred from homology"/>
<organism>
    <name type="scientific">Debaryomyces hansenii (strain ATCC 36239 / CBS 767 / BCRC 21394 / JCM 1990 / NBRC 0083 / IGC 2968)</name>
    <name type="common">Yeast</name>
    <name type="synonym">Torulaspora hansenii</name>
    <dbReference type="NCBI Taxonomy" id="284592"/>
    <lineage>
        <taxon>Eukaryota</taxon>
        <taxon>Fungi</taxon>
        <taxon>Dikarya</taxon>
        <taxon>Ascomycota</taxon>
        <taxon>Saccharomycotina</taxon>
        <taxon>Pichiomycetes</taxon>
        <taxon>Debaryomycetaceae</taxon>
        <taxon>Debaryomyces</taxon>
    </lineage>
</organism>
<accession>Q6BUV9</accession>
<sequence>MTKFRGCIDIHSGQVKQIVGGTLTQDDTTELNHKSTTTENFVSTKPSSYYAELYKNAGINGCHVIKLGSNPENDEAAKLACQSWPNNLQVGGGINGDNALEWLDVHKASHVILTSWLFSDSDEGKEFDWVKLKRVSELVGKSRLIVDLSCRELRVDDKIEWVVAMNKWQTLTNNKLSAEFLGEVSQYCDEFLIHAADVEGLCNGIDVNLVAKLGEWCPEGFEGKIVYAGGARSVKDLDTVSKLSDDKVDLTYGSALDVFGGKLVKFDDLVSWNELH</sequence>
<evidence type="ECO:0000250" key="1"/>
<evidence type="ECO:0000305" key="2"/>